<comment type="function">
    <text evidence="2">Regulatory subunit of the voltage-gated potassium (Kv) channel which, when coassembled with KCNB1, modulates the kinetics parameters of the heterotetrameric channel namely the inactivation and deactivation rate. Potassium channel subunit that does not form functional channels by itself. Reduces the deactivation rate. Moderately acceleratee activation.</text>
</comment>
<comment type="subunit">
    <text evidence="2">Heterotetramer with KCNB1. Does not form homomultimers.</text>
</comment>
<comment type="subcellular location">
    <subcellularLocation>
        <location evidence="2">Cell membrane</location>
        <topology evidence="2">Multi-pass membrane protein</topology>
    </subcellularLocation>
    <subcellularLocation>
        <location evidence="2">Cytoplasm</location>
    </subcellularLocation>
    <text evidence="2">Has to be associated with KCNB1 or possibly another partner to get inserted in the plasma membrane. Colocalizes with KCNB1 at the plasma membrane. Retains in the endoplasmic reticulum in the absence of KCNB1.</text>
</comment>
<comment type="alternative products">
    <event type="alternative splicing"/>
    <isoform>
        <id>Q8R523-1</id>
        <name>1</name>
        <name>Kv10.1b</name>
        <sequence type="displayed"/>
    </isoform>
    <isoform>
        <id>Q8R523-2</id>
        <name>2</name>
        <name>Kv10.1a</name>
        <sequence type="described" ref="VSP_001028"/>
    </isoform>
</comment>
<comment type="tissue specificity">
    <text evidence="3">Expressed strongly in neuronal cells and weakly in glial cells (PubMed:11852086).</text>
</comment>
<comment type="domain">
    <text evidence="1">The transmembrane segment S4 functions as a voltage-sensor and is characterized by a series of positively charged amino acids at every third position. Channel opening and closing is effected by a conformation change that affects the position and orientation of the voltage-sensor paddle formed by S3 and S4 within the membrane. A transmembrane electric field that is positive inside would push the positively charged S4 segment outwards, thereby opening the pore, while a field that is negative inside would pull the S4 segment inwards and close the pore. Changes in the position and orientation of S4 are then transmitted to the activation gate formed by the inner helix bundle via the S4-S5 linker region.</text>
</comment>
<comment type="similarity">
    <text evidence="5">Belongs to the potassium channel family. G (TC 1.A.1.2) subfamily. Kv6.3/KCNG3 sub-subfamily.</text>
</comment>
<feature type="chain" id="PRO_0000054079" description="Voltage-gated potassium channel regulatory subunit KCNG3">
    <location>
        <begin position="1"/>
        <end position="433"/>
    </location>
</feature>
<feature type="topological domain" description="Cytoplasmic" evidence="1">
    <location>
        <begin position="1"/>
        <end position="165"/>
    </location>
</feature>
<feature type="transmembrane region" description="Helical; Name=Segment S1" evidence="1">
    <location>
        <begin position="166"/>
        <end position="187"/>
    </location>
</feature>
<feature type="topological domain" description="Extracellular" evidence="1">
    <location>
        <begin position="188"/>
        <end position="217"/>
    </location>
</feature>
<feature type="transmembrane region" description="Helical; Name=Segment S2" evidence="1">
    <location>
        <begin position="218"/>
        <end position="239"/>
    </location>
</feature>
<feature type="topological domain" description="Cytoplasmic" evidence="1">
    <location>
        <begin position="240"/>
        <end position="250"/>
    </location>
</feature>
<feature type="transmembrane region" description="Helical; Name=Segment S3" evidence="1">
    <location>
        <begin position="251"/>
        <end position="271"/>
    </location>
</feature>
<feature type="topological domain" description="Extracellular" evidence="1">
    <location>
        <begin position="272"/>
        <end position="281"/>
    </location>
</feature>
<feature type="transmembrane region" description="Helical; Voltage-sensor; Name=Segment S4" evidence="1">
    <location>
        <begin position="282"/>
        <end position="302"/>
    </location>
</feature>
<feature type="topological domain" description="Cytoplasmic" evidence="1">
    <location>
        <begin position="303"/>
        <end position="317"/>
    </location>
</feature>
<feature type="transmembrane region" description="Helical; Name=Segment S5" evidence="1">
    <location>
        <begin position="318"/>
        <end position="339"/>
    </location>
</feature>
<feature type="topological domain" description="Extracellular" evidence="1">
    <location>
        <begin position="340"/>
        <end position="357"/>
    </location>
</feature>
<feature type="intramembrane region" description="Helical; Name=Pore helix" evidence="1">
    <location>
        <begin position="358"/>
        <end position="369"/>
    </location>
</feature>
<feature type="intramembrane region" evidence="1">
    <location>
        <begin position="370"/>
        <end position="377"/>
    </location>
</feature>
<feature type="topological domain" description="Extracellular" evidence="1">
    <location>
        <begin position="378"/>
        <end position="384"/>
    </location>
</feature>
<feature type="transmembrane region" description="Helical; Name=Segment S6" evidence="1">
    <location>
        <begin position="385"/>
        <end position="413"/>
    </location>
</feature>
<feature type="topological domain" description="Cytoplasmic" evidence="1">
    <location>
        <begin position="414"/>
        <end position="433"/>
    </location>
</feature>
<feature type="short sequence motif" description="Selectivity filter" evidence="1">
    <location>
        <begin position="370"/>
        <end position="375"/>
    </location>
</feature>
<feature type="splice variant" id="VSP_001028" description="In isoform 2." evidence="4">
    <location>
        <begin position="209"/>
        <end position="219"/>
    </location>
</feature>
<reference key="1">
    <citation type="submission" date="2001-12" db="EMBL/GenBank/DDBJ databases">
        <title>Kv10.1a and Kv10.1b: two novel alternatively spliced potassium channel subunits.</title>
        <authorList>
            <person name="Vega-Saenz de Miera E.C."/>
            <person name="Rudy B."/>
        </authorList>
    </citation>
    <scope>NUCLEOTIDE SEQUENCE [MRNA] (ISOFORMS 1 AND 2)</scope>
</reference>
<reference key="2">
    <citation type="journal article" date="2002" name="FEBS Lett.">
        <title>Molecular cloning and characterization of Kv6.3, a novel modulatory subunit for voltage-gated K(+) channel Kv2.1.</title>
        <authorList>
            <person name="Sano Y."/>
            <person name="Mochizuki S."/>
            <person name="Miyake A."/>
            <person name="Kitada C."/>
            <person name="Inamura K."/>
            <person name="Yokoi H."/>
            <person name="Nozawa K."/>
            <person name="Matsushime H."/>
            <person name="Furuichi K."/>
        </authorList>
    </citation>
    <scope>NUCLEOTIDE SEQUENCE [MRNA] OF 89-433 (ISOFORM 1)</scope>
    <scope>TISSUE SPECIFICITY</scope>
    <source>
        <tissue>Brain</tissue>
    </source>
</reference>
<accession>Q8R523</accession>
<dbReference type="EMBL" id="AF454549">
    <property type="protein sequence ID" value="AAM93550.1"/>
    <property type="molecule type" value="mRNA"/>
</dbReference>
<dbReference type="EMBL" id="AF454550">
    <property type="protein sequence ID" value="AAM93551.1"/>
    <property type="molecule type" value="mRNA"/>
</dbReference>
<dbReference type="EMBL" id="AB070605">
    <property type="protein sequence ID" value="BAB85521.1"/>
    <property type="molecule type" value="mRNA"/>
</dbReference>
<dbReference type="RefSeq" id="NP_001029129.1">
    <molecule id="Q8R523-2"/>
    <property type="nucleotide sequence ID" value="NM_001033957.1"/>
</dbReference>
<dbReference type="RefSeq" id="NP_596917.2">
    <molecule id="Q8R523-1"/>
    <property type="nucleotide sequence ID" value="NM_133426.2"/>
</dbReference>
<dbReference type="SMR" id="Q8R523"/>
<dbReference type="FunCoup" id="Q8R523">
    <property type="interactions" value="154"/>
</dbReference>
<dbReference type="STRING" id="10116.ENSRNOP00000006094"/>
<dbReference type="TCDB" id="1.A.1.2.17">
    <property type="family name" value="the voltage-gated ion channel (vic) superfamily"/>
</dbReference>
<dbReference type="GlyGen" id="Q8R523">
    <property type="glycosylation" value="1 site"/>
</dbReference>
<dbReference type="PhosphoSitePlus" id="Q8R523"/>
<dbReference type="PaxDb" id="10116-ENSRNOP00000006094"/>
<dbReference type="GeneID" id="171011"/>
<dbReference type="KEGG" id="rno:171011"/>
<dbReference type="UCSC" id="RGD:628832">
    <molecule id="Q8R523-1"/>
    <property type="organism name" value="rat"/>
</dbReference>
<dbReference type="AGR" id="RGD:628832"/>
<dbReference type="CTD" id="170850"/>
<dbReference type="RGD" id="628832">
    <property type="gene designation" value="Kcng3"/>
</dbReference>
<dbReference type="eggNOG" id="KOG3713">
    <property type="taxonomic scope" value="Eukaryota"/>
</dbReference>
<dbReference type="InParanoid" id="Q8R523"/>
<dbReference type="OrthoDB" id="14349at9989"/>
<dbReference type="PhylomeDB" id="Q8R523"/>
<dbReference type="Reactome" id="R-RNO-1296072">
    <property type="pathway name" value="Voltage gated Potassium channels"/>
</dbReference>
<dbReference type="PRO" id="PR:Q8R523"/>
<dbReference type="Proteomes" id="UP000002494">
    <property type="component" value="Unplaced"/>
</dbReference>
<dbReference type="GO" id="GO:0005783">
    <property type="term" value="C:endoplasmic reticulum"/>
    <property type="evidence" value="ECO:0000266"/>
    <property type="project" value="RGD"/>
</dbReference>
<dbReference type="GO" id="GO:0016020">
    <property type="term" value="C:membrane"/>
    <property type="evidence" value="ECO:0000318"/>
    <property type="project" value="GO_Central"/>
</dbReference>
<dbReference type="GO" id="GO:0005886">
    <property type="term" value="C:plasma membrane"/>
    <property type="evidence" value="ECO:0000250"/>
    <property type="project" value="UniProtKB"/>
</dbReference>
<dbReference type="GO" id="GO:0008076">
    <property type="term" value="C:voltage-gated potassium channel complex"/>
    <property type="evidence" value="ECO:0000250"/>
    <property type="project" value="UniProtKB"/>
</dbReference>
<dbReference type="GO" id="GO:0015459">
    <property type="term" value="F:potassium channel regulator activity"/>
    <property type="evidence" value="ECO:0000316"/>
    <property type="project" value="MGI"/>
</dbReference>
<dbReference type="GO" id="GO:0005249">
    <property type="term" value="F:voltage-gated potassium channel activity"/>
    <property type="evidence" value="ECO:0007669"/>
    <property type="project" value="InterPro"/>
</dbReference>
<dbReference type="GO" id="GO:0001508">
    <property type="term" value="P:action potential"/>
    <property type="evidence" value="ECO:0000318"/>
    <property type="project" value="GO_Central"/>
</dbReference>
<dbReference type="GO" id="GO:0071805">
    <property type="term" value="P:potassium ion transmembrane transport"/>
    <property type="evidence" value="ECO:0000318"/>
    <property type="project" value="GO_Central"/>
</dbReference>
<dbReference type="GO" id="GO:0051260">
    <property type="term" value="P:protein homooligomerization"/>
    <property type="evidence" value="ECO:0007669"/>
    <property type="project" value="InterPro"/>
</dbReference>
<dbReference type="GO" id="GO:1901379">
    <property type="term" value="P:regulation of potassium ion transmembrane transport"/>
    <property type="evidence" value="ECO:0000266"/>
    <property type="project" value="RGD"/>
</dbReference>
<dbReference type="GO" id="GO:0043266">
    <property type="term" value="P:regulation of potassium ion transport"/>
    <property type="evidence" value="ECO:0000316"/>
    <property type="project" value="MGI"/>
</dbReference>
<dbReference type="CDD" id="cd18422">
    <property type="entry name" value="BTB_POZ_KCNG3"/>
    <property type="match status" value="1"/>
</dbReference>
<dbReference type="FunFam" id="1.20.120.350:FF:000048">
    <property type="entry name" value="Potassium voltage-gated channel modifier subfamily G member 3"/>
    <property type="match status" value="1"/>
</dbReference>
<dbReference type="FunFam" id="3.30.710.10:FF:000060">
    <property type="entry name" value="Potassium voltage-gated channel modifier subfamily G member 3"/>
    <property type="match status" value="1"/>
</dbReference>
<dbReference type="FunFam" id="1.10.287.70:FF:000005">
    <property type="entry name" value="potassium voltage-gated channel subfamily G member 1"/>
    <property type="match status" value="1"/>
</dbReference>
<dbReference type="Gene3D" id="1.10.287.70">
    <property type="match status" value="1"/>
</dbReference>
<dbReference type="Gene3D" id="3.30.710.10">
    <property type="entry name" value="Potassium Channel Kv1.1, Chain A"/>
    <property type="match status" value="1"/>
</dbReference>
<dbReference type="Gene3D" id="1.20.120.350">
    <property type="entry name" value="Voltage-gated potassium channels. Chain C"/>
    <property type="match status" value="1"/>
</dbReference>
<dbReference type="InterPro" id="IPR000210">
    <property type="entry name" value="BTB/POZ_dom"/>
</dbReference>
<dbReference type="InterPro" id="IPR005821">
    <property type="entry name" value="Ion_trans_dom"/>
</dbReference>
<dbReference type="InterPro" id="IPR003968">
    <property type="entry name" value="K_chnl_volt-dep_Kv"/>
</dbReference>
<dbReference type="InterPro" id="IPR003971">
    <property type="entry name" value="K_chnl_volt-dep_Kv5/Kv9"/>
</dbReference>
<dbReference type="InterPro" id="IPR011333">
    <property type="entry name" value="SKP1/BTB/POZ_sf"/>
</dbReference>
<dbReference type="InterPro" id="IPR003131">
    <property type="entry name" value="T1-type_BTB"/>
</dbReference>
<dbReference type="InterPro" id="IPR028325">
    <property type="entry name" value="VG_K_chnl"/>
</dbReference>
<dbReference type="InterPro" id="IPR027359">
    <property type="entry name" value="Volt_channel_dom_sf"/>
</dbReference>
<dbReference type="PANTHER" id="PTHR11537:SF91">
    <property type="entry name" value="POTASSIUM VOLTAGE-GATED CHANNEL SUBFAMILY G MEMBER 3"/>
    <property type="match status" value="1"/>
</dbReference>
<dbReference type="PANTHER" id="PTHR11537">
    <property type="entry name" value="VOLTAGE-GATED POTASSIUM CHANNEL"/>
    <property type="match status" value="1"/>
</dbReference>
<dbReference type="Pfam" id="PF02214">
    <property type="entry name" value="BTB_2"/>
    <property type="match status" value="1"/>
</dbReference>
<dbReference type="Pfam" id="PF00520">
    <property type="entry name" value="Ion_trans"/>
    <property type="match status" value="1"/>
</dbReference>
<dbReference type="PRINTS" id="PR00169">
    <property type="entry name" value="KCHANNEL"/>
</dbReference>
<dbReference type="PRINTS" id="PR01494">
    <property type="entry name" value="KV9CHANNEL"/>
</dbReference>
<dbReference type="PRINTS" id="PR01491">
    <property type="entry name" value="KVCHANNEL"/>
</dbReference>
<dbReference type="SMART" id="SM00225">
    <property type="entry name" value="BTB"/>
    <property type="match status" value="1"/>
</dbReference>
<dbReference type="SUPFAM" id="SSF54695">
    <property type="entry name" value="POZ domain"/>
    <property type="match status" value="1"/>
</dbReference>
<dbReference type="SUPFAM" id="SSF81324">
    <property type="entry name" value="Voltage-gated potassium channels"/>
    <property type="match status" value="1"/>
</dbReference>
<organism>
    <name type="scientific">Rattus norvegicus</name>
    <name type="common">Rat</name>
    <dbReference type="NCBI Taxonomy" id="10116"/>
    <lineage>
        <taxon>Eukaryota</taxon>
        <taxon>Metazoa</taxon>
        <taxon>Chordata</taxon>
        <taxon>Craniata</taxon>
        <taxon>Vertebrata</taxon>
        <taxon>Euteleostomi</taxon>
        <taxon>Mammalia</taxon>
        <taxon>Eutheria</taxon>
        <taxon>Euarchontoglires</taxon>
        <taxon>Glires</taxon>
        <taxon>Rodentia</taxon>
        <taxon>Myomorpha</taxon>
        <taxon>Muroidea</taxon>
        <taxon>Muridae</taxon>
        <taxon>Murinae</taxon>
        <taxon>Rattus</taxon>
    </lineage>
</organism>
<proteinExistence type="evidence at transcript level"/>
<evidence type="ECO:0000250" key="1">
    <source>
        <dbReference type="UniProtKB" id="P63142"/>
    </source>
</evidence>
<evidence type="ECO:0000250" key="2">
    <source>
        <dbReference type="UniProtKB" id="Q8TAE7"/>
    </source>
</evidence>
<evidence type="ECO:0000269" key="3">
    <source>
    </source>
</evidence>
<evidence type="ECO:0000303" key="4">
    <source ref="1"/>
</evidence>
<evidence type="ECO:0000305" key="5"/>
<evidence type="ECO:0000305" key="6">
    <source>
    </source>
</evidence>
<evidence type="ECO:0000305" key="7">
    <source ref="1"/>
</evidence>
<evidence type="ECO:0000312" key="8">
    <source>
        <dbReference type="RGD" id="628832"/>
    </source>
</evidence>
<keyword id="KW-0025">Alternative splicing</keyword>
<keyword id="KW-1003">Cell membrane</keyword>
<keyword id="KW-0963">Cytoplasm</keyword>
<keyword id="KW-0407">Ion channel</keyword>
<keyword id="KW-0406">Ion transport</keyword>
<keyword id="KW-0472">Membrane</keyword>
<keyword id="KW-0630">Potassium</keyword>
<keyword id="KW-0631">Potassium channel</keyword>
<keyword id="KW-0633">Potassium transport</keyword>
<keyword id="KW-1185">Reference proteome</keyword>
<keyword id="KW-0812">Transmembrane</keyword>
<keyword id="KW-1133">Transmembrane helix</keyword>
<keyword id="KW-0813">Transport</keyword>
<keyword id="KW-0851">Voltage-gated channel</keyword>
<gene>
    <name evidence="8" type="primary">Kcng3</name>
</gene>
<name>KCNG3_RAT</name>
<protein>
    <recommendedName>
        <fullName evidence="5">Voltage-gated potassium channel regulatory subunit KCNG3</fullName>
    </recommendedName>
    <alternativeName>
        <fullName>Potassium voltage-gated channel subfamily G member 3</fullName>
    </alternativeName>
    <alternativeName>
        <fullName evidence="7">Voltage-gated potassium channel subunit Kv10.1</fullName>
    </alternativeName>
    <alternativeName>
        <fullName evidence="6">Voltage-gated potassium channel subunit Kv6.3</fullName>
    </alternativeName>
</protein>
<sequence>MTFGRGGAASVVLNVGGARYSLSRELLKDFPLRRVSRLHGCRSERDVLEVCDDYDRERNEYFFDRHSEAFGFILLYVRGHGKLRFAPRMCELSFYNEMIYWGLEGAHLEYCCQRRLDDRMSDTHTFHAAEELGREQPRPTGPEAAPSRRWLERMRRTFEEPTSSLAAQILASVSVVFVIVSMVVLCASTLPDWRAAAADNRSLDDRSRYSASPGREPSGIIEAICIGWFTAECIVRFIVSKNKCEFVKRPLNIIDLLAITPYYISVLMTVFTGENSQLQRAGVTLRVLRMMRIFWVIKLARHFIGLQTLGLTLKRCYREMVMLLVFICVAMAIFSALSQLLEHGLDLETSNKDFASIPAACWWVIISMTTVGYGDMYPITVPGRILGGVCVVSGIVLLALPITFIYHSFVQCYHELKFRSARYSRSLSAEFLN</sequence>